<evidence type="ECO:0000255" key="1">
    <source>
        <dbReference type="HAMAP-Rule" id="MF_00134"/>
    </source>
</evidence>
<proteinExistence type="inferred from homology"/>
<gene>
    <name evidence="1" type="primary">trpC</name>
    <name type="ordered locus">Bphy_2701</name>
</gene>
<feature type="chain" id="PRO_1000095856" description="Indole-3-glycerol phosphate synthase">
    <location>
        <begin position="1"/>
        <end position="261"/>
    </location>
</feature>
<reference key="1">
    <citation type="journal article" date="2014" name="Stand. Genomic Sci.">
        <title>Complete genome sequence of Burkholderia phymatum STM815(T), a broad host range and efficient nitrogen-fixing symbiont of Mimosa species.</title>
        <authorList>
            <person name="Moulin L."/>
            <person name="Klonowska A."/>
            <person name="Caroline B."/>
            <person name="Booth K."/>
            <person name="Vriezen J.A."/>
            <person name="Melkonian R."/>
            <person name="James E.K."/>
            <person name="Young J.P."/>
            <person name="Bena G."/>
            <person name="Hauser L."/>
            <person name="Land M."/>
            <person name="Kyrpides N."/>
            <person name="Bruce D."/>
            <person name="Chain P."/>
            <person name="Copeland A."/>
            <person name="Pitluck S."/>
            <person name="Woyke T."/>
            <person name="Lizotte-Waniewski M."/>
            <person name="Bristow J."/>
            <person name="Riley M."/>
        </authorList>
    </citation>
    <scope>NUCLEOTIDE SEQUENCE [LARGE SCALE GENOMIC DNA]</scope>
    <source>
        <strain>DSM 17167 / CIP 108236 / LMG 21445 / STM815</strain>
    </source>
</reference>
<comment type="catalytic activity">
    <reaction evidence="1">
        <text>1-(2-carboxyphenylamino)-1-deoxy-D-ribulose 5-phosphate + H(+) = (1S,2R)-1-C-(indol-3-yl)glycerol 3-phosphate + CO2 + H2O</text>
        <dbReference type="Rhea" id="RHEA:23476"/>
        <dbReference type="ChEBI" id="CHEBI:15377"/>
        <dbReference type="ChEBI" id="CHEBI:15378"/>
        <dbReference type="ChEBI" id="CHEBI:16526"/>
        <dbReference type="ChEBI" id="CHEBI:58613"/>
        <dbReference type="ChEBI" id="CHEBI:58866"/>
        <dbReference type="EC" id="4.1.1.48"/>
    </reaction>
</comment>
<comment type="pathway">
    <text evidence="1">Amino-acid biosynthesis; L-tryptophan biosynthesis; L-tryptophan from chorismate: step 4/5.</text>
</comment>
<comment type="similarity">
    <text evidence="1">Belongs to the TrpC family.</text>
</comment>
<dbReference type="EC" id="4.1.1.48" evidence="1"/>
<dbReference type="EMBL" id="CP001043">
    <property type="protein sequence ID" value="ACC71873.1"/>
    <property type="molecule type" value="Genomic_DNA"/>
</dbReference>
<dbReference type="RefSeq" id="WP_012402072.1">
    <property type="nucleotide sequence ID" value="NC_010622.1"/>
</dbReference>
<dbReference type="SMR" id="B2JHI8"/>
<dbReference type="STRING" id="391038.Bphy_2701"/>
<dbReference type="KEGG" id="bph:Bphy_2701"/>
<dbReference type="eggNOG" id="COG0134">
    <property type="taxonomic scope" value="Bacteria"/>
</dbReference>
<dbReference type="HOGENOM" id="CLU_034247_2_0_4"/>
<dbReference type="OrthoDB" id="9804217at2"/>
<dbReference type="UniPathway" id="UPA00035">
    <property type="reaction ID" value="UER00043"/>
</dbReference>
<dbReference type="Proteomes" id="UP000001192">
    <property type="component" value="Chromosome 1"/>
</dbReference>
<dbReference type="GO" id="GO:0004425">
    <property type="term" value="F:indole-3-glycerol-phosphate synthase activity"/>
    <property type="evidence" value="ECO:0007669"/>
    <property type="project" value="UniProtKB-UniRule"/>
</dbReference>
<dbReference type="GO" id="GO:0004640">
    <property type="term" value="F:phosphoribosylanthranilate isomerase activity"/>
    <property type="evidence" value="ECO:0007669"/>
    <property type="project" value="TreeGrafter"/>
</dbReference>
<dbReference type="GO" id="GO:0000162">
    <property type="term" value="P:L-tryptophan biosynthetic process"/>
    <property type="evidence" value="ECO:0007669"/>
    <property type="project" value="UniProtKB-UniRule"/>
</dbReference>
<dbReference type="CDD" id="cd00331">
    <property type="entry name" value="IGPS"/>
    <property type="match status" value="1"/>
</dbReference>
<dbReference type="FunFam" id="3.20.20.70:FF:000024">
    <property type="entry name" value="Indole-3-glycerol phosphate synthase"/>
    <property type="match status" value="1"/>
</dbReference>
<dbReference type="Gene3D" id="3.20.20.70">
    <property type="entry name" value="Aldolase class I"/>
    <property type="match status" value="1"/>
</dbReference>
<dbReference type="HAMAP" id="MF_00134_B">
    <property type="entry name" value="IGPS_B"/>
    <property type="match status" value="1"/>
</dbReference>
<dbReference type="InterPro" id="IPR013785">
    <property type="entry name" value="Aldolase_TIM"/>
</dbReference>
<dbReference type="InterPro" id="IPR045186">
    <property type="entry name" value="Indole-3-glycerol_P_synth"/>
</dbReference>
<dbReference type="InterPro" id="IPR013798">
    <property type="entry name" value="Indole-3-glycerol_P_synth_dom"/>
</dbReference>
<dbReference type="InterPro" id="IPR001468">
    <property type="entry name" value="Indole-3-GlycerolPSynthase_CS"/>
</dbReference>
<dbReference type="InterPro" id="IPR011060">
    <property type="entry name" value="RibuloseP-bd_barrel"/>
</dbReference>
<dbReference type="NCBIfam" id="NF001373">
    <property type="entry name" value="PRK00278.1-6"/>
    <property type="match status" value="1"/>
</dbReference>
<dbReference type="NCBIfam" id="NF001377">
    <property type="entry name" value="PRK00278.2-4"/>
    <property type="match status" value="1"/>
</dbReference>
<dbReference type="PANTHER" id="PTHR22854:SF2">
    <property type="entry name" value="INDOLE-3-GLYCEROL-PHOSPHATE SYNTHASE"/>
    <property type="match status" value="1"/>
</dbReference>
<dbReference type="PANTHER" id="PTHR22854">
    <property type="entry name" value="TRYPTOPHAN BIOSYNTHESIS PROTEIN"/>
    <property type="match status" value="1"/>
</dbReference>
<dbReference type="Pfam" id="PF00218">
    <property type="entry name" value="IGPS"/>
    <property type="match status" value="1"/>
</dbReference>
<dbReference type="SUPFAM" id="SSF51366">
    <property type="entry name" value="Ribulose-phoshate binding barrel"/>
    <property type="match status" value="1"/>
</dbReference>
<dbReference type="PROSITE" id="PS00614">
    <property type="entry name" value="IGPS"/>
    <property type="match status" value="1"/>
</dbReference>
<protein>
    <recommendedName>
        <fullName evidence="1">Indole-3-glycerol phosphate synthase</fullName>
        <shortName evidence="1">IGPS</shortName>
        <ecNumber evidence="1">4.1.1.48</ecNumber>
    </recommendedName>
</protein>
<keyword id="KW-0028">Amino-acid biosynthesis</keyword>
<keyword id="KW-0057">Aromatic amino acid biosynthesis</keyword>
<keyword id="KW-0210">Decarboxylase</keyword>
<keyword id="KW-0456">Lyase</keyword>
<keyword id="KW-1185">Reference proteome</keyword>
<keyword id="KW-0822">Tryptophan biosynthesis</keyword>
<name>TRPC_PARP8</name>
<organism>
    <name type="scientific">Paraburkholderia phymatum (strain DSM 17167 / CIP 108236 / LMG 21445 / STM815)</name>
    <name type="common">Burkholderia phymatum</name>
    <dbReference type="NCBI Taxonomy" id="391038"/>
    <lineage>
        <taxon>Bacteria</taxon>
        <taxon>Pseudomonadati</taxon>
        <taxon>Pseudomonadota</taxon>
        <taxon>Betaproteobacteria</taxon>
        <taxon>Burkholderiales</taxon>
        <taxon>Burkholderiaceae</taxon>
        <taxon>Paraburkholderia</taxon>
    </lineage>
</organism>
<accession>B2JHI8</accession>
<sequence>MSDILDRIIDVKRQEVRAAQQSAPLEELRLQASTRDLRDFVGAIRAKHEAGLAAVIAEVKKASPSKGVLREHFVPADIARSYANHGAACLSVLTDVQFFKGSAQYLEEARAACQLPVLRKDFIVDPYQILEARAMGADAILLIVAALETSQMQDLEAYAHSLGLAVLVEVHDKDELVEALTLKTPLIGVNNRNLRTFETSIDTTLGLLDMMPDDRIVVTESGILSRTDVERMRAMDVNTFLVGEAFMRADEPGVELARMFF</sequence>